<organism>
    <name type="scientific">Caenorhabditis briggsae</name>
    <dbReference type="NCBI Taxonomy" id="6238"/>
    <lineage>
        <taxon>Eukaryota</taxon>
        <taxon>Metazoa</taxon>
        <taxon>Ecdysozoa</taxon>
        <taxon>Nematoda</taxon>
        <taxon>Chromadorea</taxon>
        <taxon>Rhabditida</taxon>
        <taxon>Rhabditina</taxon>
        <taxon>Rhabditomorpha</taxon>
        <taxon>Rhabditoidea</taxon>
        <taxon>Rhabditidae</taxon>
        <taxon>Peloderinae</taxon>
        <taxon>Caenorhabditis</taxon>
    </lineage>
</organism>
<reference key="1">
    <citation type="journal article" date="2003" name="PLoS Biol.">
        <title>The genome sequence of Caenorhabditis briggsae: a platform for comparative genomics.</title>
        <authorList>
            <person name="Stein L.D."/>
            <person name="Bao Z."/>
            <person name="Blasiar D."/>
            <person name="Blumenthal T."/>
            <person name="Brent M.R."/>
            <person name="Chen N."/>
            <person name="Chinwalla A."/>
            <person name="Clarke L."/>
            <person name="Clee C."/>
            <person name="Coghlan A."/>
            <person name="Coulson A."/>
            <person name="D'Eustachio P."/>
            <person name="Fitch D.H.A."/>
            <person name="Fulton L.A."/>
            <person name="Fulton R.E."/>
            <person name="Griffiths-Jones S."/>
            <person name="Harris T.W."/>
            <person name="Hillier L.W."/>
            <person name="Kamath R."/>
            <person name="Kuwabara P.E."/>
            <person name="Mardis E.R."/>
            <person name="Marra M.A."/>
            <person name="Miner T.L."/>
            <person name="Minx P."/>
            <person name="Mullikin J.C."/>
            <person name="Plumb R.W."/>
            <person name="Rogers J."/>
            <person name="Schein J.E."/>
            <person name="Sohrmann M."/>
            <person name="Spieth J."/>
            <person name="Stajich J.E."/>
            <person name="Wei C."/>
            <person name="Willey D."/>
            <person name="Wilson R.K."/>
            <person name="Durbin R.M."/>
            <person name="Waterston R.H."/>
        </authorList>
    </citation>
    <scope>NUCLEOTIDE SEQUENCE [LARGE SCALE GENOMIC DNA]</scope>
    <source>
        <strain>AF16</strain>
    </source>
</reference>
<accession>Q61TH2</accession>
<accession>A8X1Q4</accession>
<keyword id="KW-0143">Chaperone</keyword>
<keyword id="KW-1015">Disulfide bond</keyword>
<keyword id="KW-0472">Membrane</keyword>
<keyword id="KW-0479">Metal-binding</keyword>
<keyword id="KW-0496">Mitochondrion</keyword>
<keyword id="KW-0999">Mitochondrion inner membrane</keyword>
<keyword id="KW-0653">Protein transport</keyword>
<keyword id="KW-1185">Reference proteome</keyword>
<keyword id="KW-0811">Translocation</keyword>
<keyword id="KW-0813">Transport</keyword>
<keyword id="KW-0862">Zinc</keyword>
<proteinExistence type="inferred from homology"/>
<gene>
    <name type="primary">tin-9.1</name>
    <name type="synonym">tin-9</name>
    <name type="ORF">CBG05752</name>
</gene>
<sequence length="78" mass="8900">MASEQNIQTFRDFLTQYNLVAEQCFTSCVNEFGSRTVNAKEESCANNCLDKFLKMTQRVSQRFQEHQILNAQANGAAM</sequence>
<feature type="chain" id="PRO_0000228038" description="Mitochondrial import inner membrane translocase subunit Tim9">
    <location>
        <begin position="1"/>
        <end position="78"/>
    </location>
</feature>
<feature type="short sequence motif" description="Twin CX3C motif">
    <location>
        <begin position="24"/>
        <end position="48"/>
    </location>
</feature>
<feature type="disulfide bond" evidence="1">
    <location>
        <begin position="24"/>
        <end position="48"/>
    </location>
</feature>
<feature type="disulfide bond" evidence="1">
    <location>
        <begin position="28"/>
        <end position="44"/>
    </location>
</feature>
<evidence type="ECO:0000250" key="1"/>
<evidence type="ECO:0000305" key="2"/>
<name>TIM9_CAEBR</name>
<comment type="function">
    <text evidence="1">Mitochondrial intermembrane chaperone that participates in the import and insertion of multi-pass transmembrane proteins into the mitochondrial inner membrane. May also be required for the transfer of beta-barrel precursors from the TOM complex to the sorting and assembly machinery (SAM complex) of the outer membrane. Acts as a chaperone-like protein that protects the hydrophobic precursors from aggregation and guide them through the mitochondrial intermembrane space (By similarity).</text>
</comment>
<comment type="subunit">
    <text evidence="1">Heterohexamer; composed of 3 copies of tim-9/tin-9.1 and 3 copies of tim-10/tin-10, named soluble 70 kDa complex. The complex associates with the tim-22 component of the TIM22 complex. Interacts with multi-pass transmembrane proteins in transit (By similarity).</text>
</comment>
<comment type="subcellular location">
    <subcellularLocation>
        <location evidence="1">Mitochondrion inner membrane</location>
        <topology evidence="1">Peripheral membrane protein</topology>
        <orientation evidence="1">Intermembrane side</orientation>
    </subcellularLocation>
</comment>
<comment type="domain">
    <text evidence="1">The twin CX3C motif contains 4 conserved Cys residues that form 2 disulfide bonds in the mitochondrial intermembrane space. However, during the transit of tim-9/tin-9.1 from cytoplasm into mitochondrion, the Cys residues probably coordinate zinc, thereby preventing folding and allowing its transfer across mitochondrial outer membrane (By similarity).</text>
</comment>
<comment type="similarity">
    <text evidence="2">Belongs to the small Tim family.</text>
</comment>
<dbReference type="EMBL" id="HE600909">
    <property type="protein sequence ID" value="CAP26564.1"/>
    <property type="molecule type" value="Genomic_DNA"/>
</dbReference>
<dbReference type="SMR" id="Q61TH2"/>
<dbReference type="FunCoup" id="Q61TH2">
    <property type="interactions" value="2268"/>
</dbReference>
<dbReference type="STRING" id="6238.Q61TH2"/>
<dbReference type="EnsemblMetazoa" id="CBG05752.1">
    <property type="protein sequence ID" value="CBG05752.1"/>
    <property type="gene ID" value="WBGene00028143"/>
</dbReference>
<dbReference type="KEGG" id="cbr:CBG_05752"/>
<dbReference type="CTD" id="8575066"/>
<dbReference type="WormBase" id="CBG05752">
    <property type="protein sequence ID" value="CBP01491"/>
    <property type="gene ID" value="WBGene00028143"/>
    <property type="gene designation" value="Cbr-tin-9.1"/>
</dbReference>
<dbReference type="eggNOG" id="KOG3479">
    <property type="taxonomic scope" value="Eukaryota"/>
</dbReference>
<dbReference type="HOGENOM" id="CLU_141397_3_3_1"/>
<dbReference type="InParanoid" id="Q61TH2"/>
<dbReference type="OMA" id="QDFLRMY"/>
<dbReference type="Proteomes" id="UP000008549">
    <property type="component" value="Unassembled WGS sequence"/>
</dbReference>
<dbReference type="GO" id="GO:0005743">
    <property type="term" value="C:mitochondrial inner membrane"/>
    <property type="evidence" value="ECO:0007669"/>
    <property type="project" value="UniProtKB-SubCell"/>
</dbReference>
<dbReference type="GO" id="GO:0046872">
    <property type="term" value="F:metal ion binding"/>
    <property type="evidence" value="ECO:0007669"/>
    <property type="project" value="UniProtKB-KW"/>
</dbReference>
<dbReference type="GO" id="GO:0045039">
    <property type="term" value="P:protein insertion into mitochondrial inner membrane"/>
    <property type="evidence" value="ECO:0007669"/>
    <property type="project" value="EnsemblMetazoa"/>
</dbReference>
<dbReference type="GO" id="GO:0040014">
    <property type="term" value="P:regulation of multicellular organism growth"/>
    <property type="evidence" value="ECO:0007669"/>
    <property type="project" value="EnsemblMetazoa"/>
</dbReference>
<dbReference type="FunFam" id="1.10.287.810:FF:000015">
    <property type="entry name" value="Mitochondrial import inner membrane translocase subunit Tim9"/>
    <property type="match status" value="1"/>
</dbReference>
<dbReference type="Gene3D" id="1.10.287.810">
    <property type="entry name" value="Mitochondrial import inner membrane translocase subunit tim13 like domains"/>
    <property type="match status" value="1"/>
</dbReference>
<dbReference type="InterPro" id="IPR050673">
    <property type="entry name" value="Mito_inner_translocase_sub"/>
</dbReference>
<dbReference type="InterPro" id="IPR004217">
    <property type="entry name" value="Tim10-like"/>
</dbReference>
<dbReference type="InterPro" id="IPR035427">
    <property type="entry name" value="Tim10-like_dom_sf"/>
</dbReference>
<dbReference type="PANTHER" id="PTHR13172">
    <property type="entry name" value="MITOCHONDRIAL IMPORT INNER MEMBRANE TRANSLOCASE SUBUNIT TIM9B"/>
    <property type="match status" value="1"/>
</dbReference>
<dbReference type="Pfam" id="PF02953">
    <property type="entry name" value="zf-Tim10_DDP"/>
    <property type="match status" value="1"/>
</dbReference>
<dbReference type="SUPFAM" id="SSF144122">
    <property type="entry name" value="Tim10-like"/>
    <property type="match status" value="1"/>
</dbReference>
<protein>
    <recommendedName>
        <fullName>Mitochondrial import inner membrane translocase subunit Tim9</fullName>
    </recommendedName>
</protein>